<proteinExistence type="inferred from homology"/>
<feature type="chain" id="PRO_1000010348" description="Imidazoleglycerol-phosphate dehydratase">
    <location>
        <begin position="1"/>
        <end position="195"/>
    </location>
</feature>
<gene>
    <name evidence="1" type="primary">hisB</name>
    <name type="ordered locus">RD1_3556</name>
</gene>
<organism>
    <name type="scientific">Roseobacter denitrificans (strain ATCC 33942 / OCh 114)</name>
    <name type="common">Erythrobacter sp. (strain OCh 114)</name>
    <name type="synonym">Roseobacter denitrificans</name>
    <dbReference type="NCBI Taxonomy" id="375451"/>
    <lineage>
        <taxon>Bacteria</taxon>
        <taxon>Pseudomonadati</taxon>
        <taxon>Pseudomonadota</taxon>
        <taxon>Alphaproteobacteria</taxon>
        <taxon>Rhodobacterales</taxon>
        <taxon>Roseobacteraceae</taxon>
        <taxon>Roseobacter</taxon>
    </lineage>
</organism>
<dbReference type="EC" id="4.2.1.19" evidence="1"/>
<dbReference type="EMBL" id="CP000362">
    <property type="protein sequence ID" value="ABG33037.1"/>
    <property type="molecule type" value="Genomic_DNA"/>
</dbReference>
<dbReference type="RefSeq" id="WP_011569650.1">
    <property type="nucleotide sequence ID" value="NC_008209.1"/>
</dbReference>
<dbReference type="SMR" id="Q162Q6"/>
<dbReference type="STRING" id="375451.RD1_3556"/>
<dbReference type="KEGG" id="rde:RD1_3556"/>
<dbReference type="eggNOG" id="COG0131">
    <property type="taxonomic scope" value="Bacteria"/>
</dbReference>
<dbReference type="HOGENOM" id="CLU_044308_2_0_5"/>
<dbReference type="OrthoDB" id="9813612at2"/>
<dbReference type="UniPathway" id="UPA00031">
    <property type="reaction ID" value="UER00011"/>
</dbReference>
<dbReference type="Proteomes" id="UP000007029">
    <property type="component" value="Chromosome"/>
</dbReference>
<dbReference type="GO" id="GO:0005737">
    <property type="term" value="C:cytoplasm"/>
    <property type="evidence" value="ECO:0007669"/>
    <property type="project" value="UniProtKB-SubCell"/>
</dbReference>
<dbReference type="GO" id="GO:0004424">
    <property type="term" value="F:imidazoleglycerol-phosphate dehydratase activity"/>
    <property type="evidence" value="ECO:0007669"/>
    <property type="project" value="UniProtKB-UniRule"/>
</dbReference>
<dbReference type="GO" id="GO:0000105">
    <property type="term" value="P:L-histidine biosynthetic process"/>
    <property type="evidence" value="ECO:0007669"/>
    <property type="project" value="UniProtKB-UniRule"/>
</dbReference>
<dbReference type="CDD" id="cd07914">
    <property type="entry name" value="IGPD"/>
    <property type="match status" value="1"/>
</dbReference>
<dbReference type="FunFam" id="3.30.230.40:FF:000001">
    <property type="entry name" value="Imidazoleglycerol-phosphate dehydratase HisB"/>
    <property type="match status" value="1"/>
</dbReference>
<dbReference type="FunFam" id="3.30.230.40:FF:000003">
    <property type="entry name" value="Imidazoleglycerol-phosphate dehydratase HisB"/>
    <property type="match status" value="1"/>
</dbReference>
<dbReference type="Gene3D" id="3.30.230.40">
    <property type="entry name" value="Imidazole glycerol phosphate dehydratase, domain 1"/>
    <property type="match status" value="2"/>
</dbReference>
<dbReference type="HAMAP" id="MF_00076">
    <property type="entry name" value="HisB"/>
    <property type="match status" value="1"/>
</dbReference>
<dbReference type="InterPro" id="IPR038494">
    <property type="entry name" value="IGPD_sf"/>
</dbReference>
<dbReference type="InterPro" id="IPR000807">
    <property type="entry name" value="ImidazoleglycerolP_deHydtase"/>
</dbReference>
<dbReference type="InterPro" id="IPR020565">
    <property type="entry name" value="ImidazoleglycerP_deHydtase_CS"/>
</dbReference>
<dbReference type="InterPro" id="IPR020568">
    <property type="entry name" value="Ribosomal_Su5_D2-typ_SF"/>
</dbReference>
<dbReference type="NCBIfam" id="NF002109">
    <property type="entry name" value="PRK00951.1-5"/>
    <property type="match status" value="1"/>
</dbReference>
<dbReference type="NCBIfam" id="NF002111">
    <property type="entry name" value="PRK00951.2-1"/>
    <property type="match status" value="1"/>
</dbReference>
<dbReference type="NCBIfam" id="NF002114">
    <property type="entry name" value="PRK00951.2-4"/>
    <property type="match status" value="1"/>
</dbReference>
<dbReference type="PANTHER" id="PTHR23133:SF2">
    <property type="entry name" value="IMIDAZOLEGLYCEROL-PHOSPHATE DEHYDRATASE"/>
    <property type="match status" value="1"/>
</dbReference>
<dbReference type="PANTHER" id="PTHR23133">
    <property type="entry name" value="IMIDAZOLEGLYCEROL-PHOSPHATE DEHYDRATASE HIS7"/>
    <property type="match status" value="1"/>
</dbReference>
<dbReference type="Pfam" id="PF00475">
    <property type="entry name" value="IGPD"/>
    <property type="match status" value="1"/>
</dbReference>
<dbReference type="SUPFAM" id="SSF54211">
    <property type="entry name" value="Ribosomal protein S5 domain 2-like"/>
    <property type="match status" value="2"/>
</dbReference>
<dbReference type="PROSITE" id="PS00954">
    <property type="entry name" value="IGP_DEHYDRATASE_1"/>
    <property type="match status" value="1"/>
</dbReference>
<dbReference type="PROSITE" id="PS00955">
    <property type="entry name" value="IGP_DEHYDRATASE_2"/>
    <property type="match status" value="1"/>
</dbReference>
<protein>
    <recommendedName>
        <fullName evidence="1">Imidazoleglycerol-phosphate dehydratase</fullName>
        <shortName evidence="1">IGPD</shortName>
        <ecNumber evidence="1">4.2.1.19</ecNumber>
    </recommendedName>
</protein>
<accession>Q162Q6</accession>
<name>HIS7_ROSDO</name>
<reference key="1">
    <citation type="journal article" date="2007" name="J. Bacteriol.">
        <title>The complete genome sequence of Roseobacter denitrificans reveals a mixotrophic rather than photosynthetic metabolism.</title>
        <authorList>
            <person name="Swingley W.D."/>
            <person name="Sadekar S."/>
            <person name="Mastrian S.D."/>
            <person name="Matthies H.J."/>
            <person name="Hao J."/>
            <person name="Ramos H."/>
            <person name="Acharya C.R."/>
            <person name="Conrad A.L."/>
            <person name="Taylor H.L."/>
            <person name="Dejesa L.C."/>
            <person name="Shah M.K."/>
            <person name="O'Huallachain M.E."/>
            <person name="Lince M.T."/>
            <person name="Blankenship R.E."/>
            <person name="Beatty J.T."/>
            <person name="Touchman J.W."/>
        </authorList>
    </citation>
    <scope>NUCLEOTIDE SEQUENCE [LARGE SCALE GENOMIC DNA]</scope>
    <source>
        <strain>ATCC 33942 / OCh 114</strain>
    </source>
</reference>
<evidence type="ECO:0000255" key="1">
    <source>
        <dbReference type="HAMAP-Rule" id="MF_00076"/>
    </source>
</evidence>
<sequence>MRSHSITRSTAETDIEVSVQLDGTGRYDNQTGVGFFDHMLDQLARHSLIDLSVRAKGDLHVDDHHTVEDTGIALGQALAGALGDKRGIVRYGSCLLPMDDALVRCALDLSARPYLIWNVDMPTAKIGTFDTELVREFFTALATHGGITLHIDLLHGINSHHIAEATFKSVARALRQAVETDPRKSDAIPSTKGAL</sequence>
<comment type="catalytic activity">
    <reaction evidence="1">
        <text>D-erythro-1-(imidazol-4-yl)glycerol 3-phosphate = 3-(imidazol-4-yl)-2-oxopropyl phosphate + H2O</text>
        <dbReference type="Rhea" id="RHEA:11040"/>
        <dbReference type="ChEBI" id="CHEBI:15377"/>
        <dbReference type="ChEBI" id="CHEBI:57766"/>
        <dbReference type="ChEBI" id="CHEBI:58278"/>
        <dbReference type="EC" id="4.2.1.19"/>
    </reaction>
</comment>
<comment type="pathway">
    <text evidence="1">Amino-acid biosynthesis; L-histidine biosynthesis; L-histidine from 5-phospho-alpha-D-ribose 1-diphosphate: step 6/9.</text>
</comment>
<comment type="subcellular location">
    <subcellularLocation>
        <location evidence="1">Cytoplasm</location>
    </subcellularLocation>
</comment>
<comment type="similarity">
    <text evidence="1">Belongs to the imidazoleglycerol-phosphate dehydratase family.</text>
</comment>
<keyword id="KW-0028">Amino-acid biosynthesis</keyword>
<keyword id="KW-0963">Cytoplasm</keyword>
<keyword id="KW-0368">Histidine biosynthesis</keyword>
<keyword id="KW-0456">Lyase</keyword>
<keyword id="KW-1185">Reference proteome</keyword>